<keyword id="KW-1185">Reference proteome</keyword>
<keyword id="KW-0843">Virulence</keyword>
<proteinExistence type="predicted"/>
<protein>
    <recommendedName>
        <fullName evidence="4">Toxin protein Tse5</fullName>
    </recommendedName>
</protein>
<evidence type="ECO:0000256" key="1">
    <source>
        <dbReference type="SAM" id="MobiDB-lite"/>
    </source>
</evidence>
<evidence type="ECO:0000269" key="2">
    <source>
    </source>
</evidence>
<evidence type="ECO:0000269" key="3">
    <source>
    </source>
</evidence>
<evidence type="ECO:0000303" key="4">
    <source>
    </source>
</evidence>
<accession>Q9I0F4</accession>
<reference key="1">
    <citation type="journal article" date="2000" name="Nature">
        <title>Complete genome sequence of Pseudomonas aeruginosa PAO1, an opportunistic pathogen.</title>
        <authorList>
            <person name="Stover C.K."/>
            <person name="Pham X.-Q.T."/>
            <person name="Erwin A.L."/>
            <person name="Mizoguchi S.D."/>
            <person name="Warrener P."/>
            <person name="Hickey M.J."/>
            <person name="Brinkman F.S.L."/>
            <person name="Hufnagle W.O."/>
            <person name="Kowalik D.J."/>
            <person name="Lagrou M."/>
            <person name="Garber R.L."/>
            <person name="Goltry L."/>
            <person name="Tolentino E."/>
            <person name="Westbrock-Wadman S."/>
            <person name="Yuan Y."/>
            <person name="Brody L.L."/>
            <person name="Coulter S.N."/>
            <person name="Folger K.R."/>
            <person name="Kas A."/>
            <person name="Larbig K."/>
            <person name="Lim R.M."/>
            <person name="Smith K.A."/>
            <person name="Spencer D.H."/>
            <person name="Wong G.K.-S."/>
            <person name="Wu Z."/>
            <person name="Paulsen I.T."/>
            <person name="Reizer J."/>
            <person name="Saier M.H. Jr."/>
            <person name="Hancock R.E.W."/>
            <person name="Lory S."/>
            <person name="Olson M.V."/>
        </authorList>
    </citation>
    <scope>NUCLEOTIDE SEQUENCE [LARGE SCALE GENOMIC DNA]</scope>
    <source>
        <strain>ATCC 15692 / DSM 22644 / CIP 104116 / JCM 14847 / LMG 12228 / 1C / PRS 101 / PAO1</strain>
    </source>
</reference>
<reference key="2">
    <citation type="journal article" date="2014" name="J. Biol. Chem.">
        <title>The VgrG proteins are 'a la carte' delivery systems for bacterial type VI effectors.</title>
        <authorList>
            <person name="Hachani A."/>
            <person name="Allsopp L.P."/>
            <person name="Oduko Y."/>
            <person name="Filloux A."/>
        </authorList>
    </citation>
    <scope>FUNCTION</scope>
    <source>
        <strain>PAK</strain>
    </source>
</reference>
<reference key="3">
    <citation type="journal article" date="2014" name="Mol. Microbiol.">
        <title>Genetically distinct pathways guide effector export through the type VI secretion system.</title>
        <authorList>
            <person name="Whitney J.C."/>
            <person name="Beck C.M."/>
            <person name="Goo Y.A."/>
            <person name="Russell A.B."/>
            <person name="Harding B.N."/>
            <person name="De Leon J.A."/>
            <person name="Cunningham D.A."/>
            <person name="Tran B.Q."/>
            <person name="Low D.A."/>
            <person name="Goodlett D.R."/>
            <person name="Hayes C.S."/>
            <person name="Mougous J.D."/>
        </authorList>
    </citation>
    <scope>FUNCTION</scope>
    <scope>DISRUPTION PHENOTYPE</scope>
    <source>
        <strain>ATCC 15692 / DSM 22644 / CIP 104116 / JCM 14847 / LMG 12228 / 1C / PRS 101 / PAO1</strain>
    </source>
</reference>
<gene>
    <name evidence="4" type="primary">tse5</name>
    <name type="ordered locus">PA2684</name>
</gene>
<sequence>MSGLPVSHVGEKVSGGVISTGSPTVHVGSSAVGLADRVSACVPLVGKPVNPMLGSKLLPEEVDFALAAPDTFTFARGYLSSNPRIGRLGRGWWLPGESMHLELSEDACVLVDAQGRRIGFPALAPGAQHYSGSEELWLRRGGSSGGEAQAWRGRWAAVPAELQTQEGSVLVLSGHSYLHFQRCPDGIWRLQASFGRAGYRTEFRWSGRGLLTGVRDSAGRSYALVYQQACEPSEGDDGLRLFGVILASHDGPPPDYIDPQSPGLDWLVRYQFSDSGDLIAVRDRLGQVVRVFAWREHMLVAHGEPGGLEVRYEWDVHAPHGRVVKQIEAGGLTRTFRYLRDATEVSDSLGRVERYEFAGEGGQRRWTALVRADGSRSEFDYDLFGRLVAMRDPLGRETRRRRDGQGRMLEEESPGKARYRKRVDEETGLLVELEDAMQRRWTFERDERGNATTVRGPAGSTRYAYEDPRLPDRPTRIVDPRGGERRLEWNRFGLLAALTDCSGQVWRYDYDNEGRLVASSDPLGQLTRRRYDPLGQLIGLELADGSALSYEYDALGRQTRIADAEGHATLFSWGHGDLLARVSDAGGGELSYLHDEAGRLVALTNENGVQAQFRYDLLDRLVEETGFDGRRQRYRYNAADELIAREDADGRETTYAYDRDGRLASIRVPATEHAPALVERYRWLADGRLASAGGADCEVRYTYDEVGNLRLESQVHADGWVYSVEHSHDALGVRQTSRYGDAPPVAWLTYGPGHLHGALVGAVELAFERDALHREVRRDARRDGQDDALFTQERQHAPLGRLQRSRLRLAGGFDWQRGYRYDGLGQLVGIDDNQYPSVRYEYDLGGRLLASRRAGAAASTYRYDAAGNRLEGVGEHAREDARQAFAENELYRSGFSRSETRASQAGEGPARWAGNRVERIAGNRYRFDALGNLVERIGADGERLRLAYDGAQRLVHLTRDYADGTRLEARYRYDALSRRIAKVVLRDGVEQQVRFGWDGDRQCAEAFARELRTTVHEPGGFVPLLRLEQACEPDPPELLQLRQAFAAEGQPLPAQCVPALGEARIAFFHTDHLGTPLQLSDERGQLRWQGVPDDWRAVAPERQPGAQPIRFQGQYHDEESGLYYNRYRYYLPEAGRYASQDPLGLGGGPNPYAYALNAPTLAYDPTGLIIPLVVIGAFAARAAIGAALGAGIELGMQTGKQVLGQMKDNWDSDRDLTDIKWKCIDINWKHVGASAAIGTVAPGMLSTGKTVVQSAKAIRTLSGQAANTANRAAKLAARKAAHADTIKKAVATQAAWQTGKQIVKCPLKDEEEECPPQ</sequence>
<name>TSE5_PSEAE</name>
<dbReference type="EMBL" id="AE004091">
    <property type="protein sequence ID" value="AAG06072.1"/>
    <property type="molecule type" value="Genomic_DNA"/>
</dbReference>
<dbReference type="PIR" id="F83310">
    <property type="entry name" value="F83310"/>
</dbReference>
<dbReference type="RefSeq" id="NP_251374.1">
    <property type="nucleotide sequence ID" value="NC_002516.2"/>
</dbReference>
<dbReference type="RefSeq" id="WP_003115323.1">
    <property type="nucleotide sequence ID" value="NZ_QZGE01000008.1"/>
</dbReference>
<dbReference type="EMDB" id="EMD-16778"/>
<dbReference type="SMR" id="Q9I0F4"/>
<dbReference type="FunCoup" id="Q9I0F4">
    <property type="interactions" value="266"/>
</dbReference>
<dbReference type="STRING" id="208964.PA2684"/>
<dbReference type="PaxDb" id="208964-PA2684"/>
<dbReference type="GeneID" id="879129"/>
<dbReference type="KEGG" id="pae:PA2684"/>
<dbReference type="PATRIC" id="fig|208964.12.peg.2808"/>
<dbReference type="PseudoCAP" id="PA2684"/>
<dbReference type="HOGENOM" id="CLU_001218_0_1_6"/>
<dbReference type="InParanoid" id="Q9I0F4"/>
<dbReference type="OrthoDB" id="9816400at2"/>
<dbReference type="PhylomeDB" id="Q9I0F4"/>
<dbReference type="BioCyc" id="PAER208964:G1FZ6-2724-MONOMER"/>
<dbReference type="Proteomes" id="UP000002438">
    <property type="component" value="Chromosome"/>
</dbReference>
<dbReference type="GO" id="GO:0097351">
    <property type="term" value="F:toxin sequestering activity"/>
    <property type="evidence" value="ECO:0000315"/>
    <property type="project" value="PseudoCAP"/>
</dbReference>
<dbReference type="GO" id="GO:0033103">
    <property type="term" value="P:protein secretion by the type VI secretion system"/>
    <property type="evidence" value="ECO:0000314"/>
    <property type="project" value="PseudoCAP"/>
</dbReference>
<dbReference type="Gene3D" id="2.180.10.10">
    <property type="entry name" value="RHS repeat-associated core"/>
    <property type="match status" value="2"/>
</dbReference>
<dbReference type="InterPro" id="IPR045351">
    <property type="entry name" value="DUF6531"/>
</dbReference>
<dbReference type="InterPro" id="IPR001826">
    <property type="entry name" value="RHS"/>
</dbReference>
<dbReference type="InterPro" id="IPR022385">
    <property type="entry name" value="Rhs_assc_core"/>
</dbReference>
<dbReference type="InterPro" id="IPR031325">
    <property type="entry name" value="RHS_repeat"/>
</dbReference>
<dbReference type="InterPro" id="IPR050708">
    <property type="entry name" value="T6SS_VgrG/RHS"/>
</dbReference>
<dbReference type="InterPro" id="IPR006530">
    <property type="entry name" value="YD"/>
</dbReference>
<dbReference type="NCBIfam" id="TIGR03696">
    <property type="entry name" value="Rhs_assc_core"/>
    <property type="match status" value="1"/>
</dbReference>
<dbReference type="NCBIfam" id="TIGR01643">
    <property type="entry name" value="YD_repeat_2x"/>
    <property type="match status" value="6"/>
</dbReference>
<dbReference type="PANTHER" id="PTHR32305">
    <property type="match status" value="1"/>
</dbReference>
<dbReference type="PANTHER" id="PTHR32305:SF15">
    <property type="entry name" value="PROTEIN RHSA-RELATED"/>
    <property type="match status" value="1"/>
</dbReference>
<dbReference type="Pfam" id="PF20148">
    <property type="entry name" value="DUF6531"/>
    <property type="match status" value="1"/>
</dbReference>
<dbReference type="Pfam" id="PF03527">
    <property type="entry name" value="RHS"/>
    <property type="match status" value="1"/>
</dbReference>
<dbReference type="Pfam" id="PF05593">
    <property type="entry name" value="RHS_repeat"/>
    <property type="match status" value="6"/>
</dbReference>
<dbReference type="PRINTS" id="PR00394">
    <property type="entry name" value="RHSPROTEIN"/>
</dbReference>
<dbReference type="SUPFAM" id="SSF69304">
    <property type="entry name" value="Tricorn protease N-terminal domain"/>
    <property type="match status" value="1"/>
</dbReference>
<feature type="chain" id="PRO_0000449107" description="Toxin protein Tse5">
    <location>
        <begin position="1"/>
        <end position="1317"/>
    </location>
</feature>
<feature type="region of interest" description="Disordered" evidence="1">
    <location>
        <begin position="395"/>
        <end position="419"/>
    </location>
</feature>
<feature type="compositionally biased region" description="Basic and acidic residues" evidence="1">
    <location>
        <begin position="403"/>
        <end position="415"/>
    </location>
</feature>
<organism>
    <name type="scientific">Pseudomonas aeruginosa (strain ATCC 15692 / DSM 22644 / CIP 104116 / JCM 14847 / LMG 12228 / 1C / PRS 101 / PAO1)</name>
    <dbReference type="NCBI Taxonomy" id="208964"/>
    <lineage>
        <taxon>Bacteria</taxon>
        <taxon>Pseudomonadati</taxon>
        <taxon>Pseudomonadota</taxon>
        <taxon>Gammaproteobacteria</taxon>
        <taxon>Pseudomonadales</taxon>
        <taxon>Pseudomonadaceae</taxon>
        <taxon>Pseudomonas</taxon>
    </lineage>
</organism>
<comment type="function">
    <text evidence="2 3">Toxin secreted by the H1 type VI (H1-T6SS) secretion system that acts on bacterial target cells. The producing bacterium is protected by a cognate immunity protein.</text>
</comment>
<comment type="disruption phenotype">
    <text evidence="2">Deletion mutant together with deletion of its cognate immunity protein Tsi5 leads to a significant loss of fitness advantage when placed in competition with parental strains.</text>
</comment>